<keyword id="KW-0175">Coiled coil</keyword>
<keyword id="KW-0963">Cytoplasm</keyword>
<keyword id="KW-0440">LIM domain</keyword>
<keyword id="KW-0479">Metal-binding</keyword>
<keyword id="KW-1185">Reference proteome</keyword>
<keyword id="KW-0677">Repeat</keyword>
<keyword id="KW-0862">Zinc</keyword>
<keyword id="KW-0863">Zinc-finger</keyword>
<name>Y2098_DICDI</name>
<organism>
    <name type="scientific">Dictyostelium discoideum</name>
    <name type="common">Social amoeba</name>
    <dbReference type="NCBI Taxonomy" id="44689"/>
    <lineage>
        <taxon>Eukaryota</taxon>
        <taxon>Amoebozoa</taxon>
        <taxon>Evosea</taxon>
        <taxon>Eumycetozoa</taxon>
        <taxon>Dictyostelia</taxon>
        <taxon>Dictyosteliales</taxon>
        <taxon>Dictyosteliaceae</taxon>
        <taxon>Dictyostelium</taxon>
    </lineage>
</organism>
<proteinExistence type="inferred from homology"/>
<reference key="1">
    <citation type="journal article" date="2002" name="Nature">
        <title>Sequence and analysis of chromosome 2 of Dictyostelium discoideum.</title>
        <authorList>
            <person name="Gloeckner G."/>
            <person name="Eichinger L."/>
            <person name="Szafranski K."/>
            <person name="Pachebat J.A."/>
            <person name="Bankier A.T."/>
            <person name="Dear P.H."/>
            <person name="Lehmann R."/>
            <person name="Baumgart C."/>
            <person name="Parra G."/>
            <person name="Abril J.F."/>
            <person name="Guigo R."/>
            <person name="Kumpf K."/>
            <person name="Tunggal B."/>
            <person name="Cox E.C."/>
            <person name="Quail M.A."/>
            <person name="Platzer M."/>
            <person name="Rosenthal A."/>
            <person name="Noegel A.A."/>
        </authorList>
    </citation>
    <scope>NUCLEOTIDE SEQUENCE [LARGE SCALE GENOMIC DNA]</scope>
    <source>
        <strain>AX4</strain>
    </source>
</reference>
<reference key="2">
    <citation type="journal article" date="2005" name="Nature">
        <title>The genome of the social amoeba Dictyostelium discoideum.</title>
        <authorList>
            <person name="Eichinger L."/>
            <person name="Pachebat J.A."/>
            <person name="Gloeckner G."/>
            <person name="Rajandream M.A."/>
            <person name="Sucgang R."/>
            <person name="Berriman M."/>
            <person name="Song J."/>
            <person name="Olsen R."/>
            <person name="Szafranski K."/>
            <person name="Xu Q."/>
            <person name="Tunggal B."/>
            <person name="Kummerfeld S."/>
            <person name="Madera M."/>
            <person name="Konfortov B.A."/>
            <person name="Rivero F."/>
            <person name="Bankier A.T."/>
            <person name="Lehmann R."/>
            <person name="Hamlin N."/>
            <person name="Davies R."/>
            <person name="Gaudet P."/>
            <person name="Fey P."/>
            <person name="Pilcher K."/>
            <person name="Chen G."/>
            <person name="Saunders D."/>
            <person name="Sodergren E.J."/>
            <person name="Davis P."/>
            <person name="Kerhornou A."/>
            <person name="Nie X."/>
            <person name="Hall N."/>
            <person name="Anjard C."/>
            <person name="Hemphill L."/>
            <person name="Bason N."/>
            <person name="Farbrother P."/>
            <person name="Desany B."/>
            <person name="Just E."/>
            <person name="Morio T."/>
            <person name="Rost R."/>
            <person name="Churcher C.M."/>
            <person name="Cooper J."/>
            <person name="Haydock S."/>
            <person name="van Driessche N."/>
            <person name="Cronin A."/>
            <person name="Goodhead I."/>
            <person name="Muzny D.M."/>
            <person name="Mourier T."/>
            <person name="Pain A."/>
            <person name="Lu M."/>
            <person name="Harper D."/>
            <person name="Lindsay R."/>
            <person name="Hauser H."/>
            <person name="James K.D."/>
            <person name="Quiles M."/>
            <person name="Madan Babu M."/>
            <person name="Saito T."/>
            <person name="Buchrieser C."/>
            <person name="Wardroper A."/>
            <person name="Felder M."/>
            <person name="Thangavelu M."/>
            <person name="Johnson D."/>
            <person name="Knights A."/>
            <person name="Loulseged H."/>
            <person name="Mungall K.L."/>
            <person name="Oliver K."/>
            <person name="Price C."/>
            <person name="Quail M.A."/>
            <person name="Urushihara H."/>
            <person name="Hernandez J."/>
            <person name="Rabbinowitsch E."/>
            <person name="Steffen D."/>
            <person name="Sanders M."/>
            <person name="Ma J."/>
            <person name="Kohara Y."/>
            <person name="Sharp S."/>
            <person name="Simmonds M.N."/>
            <person name="Spiegler S."/>
            <person name="Tivey A."/>
            <person name="Sugano S."/>
            <person name="White B."/>
            <person name="Walker D."/>
            <person name="Woodward J.R."/>
            <person name="Winckler T."/>
            <person name="Tanaka Y."/>
            <person name="Shaulsky G."/>
            <person name="Schleicher M."/>
            <person name="Weinstock G.M."/>
            <person name="Rosenthal A."/>
            <person name="Cox E.C."/>
            <person name="Chisholm R.L."/>
            <person name="Gibbs R.A."/>
            <person name="Loomis W.F."/>
            <person name="Platzer M."/>
            <person name="Kay R.R."/>
            <person name="Williams J.G."/>
            <person name="Dear P.H."/>
            <person name="Noegel A.A."/>
            <person name="Barrell B.G."/>
            <person name="Kuspa A."/>
        </authorList>
    </citation>
    <scope>NUCLEOTIDE SEQUENCE [LARGE SCALE GENOMIC DNA]</scope>
    <source>
        <strain>AX4</strain>
    </source>
</reference>
<dbReference type="EMBL" id="AAFI02000007">
    <property type="protein sequence ID" value="EAL71410.1"/>
    <property type="molecule type" value="Genomic_DNA"/>
</dbReference>
<dbReference type="RefSeq" id="XP_645327.1">
    <property type="nucleotide sequence ID" value="XM_640235.1"/>
</dbReference>
<dbReference type="SMR" id="Q55A66"/>
<dbReference type="STRING" id="44689.Q55A66"/>
<dbReference type="GlyGen" id="Q55A66">
    <property type="glycosylation" value="1 site"/>
</dbReference>
<dbReference type="PaxDb" id="44689-DDB0216959"/>
<dbReference type="EnsemblProtists" id="EAL71410">
    <property type="protein sequence ID" value="EAL71410"/>
    <property type="gene ID" value="DDB_G0272098"/>
</dbReference>
<dbReference type="GeneID" id="8618289"/>
<dbReference type="KEGG" id="ddi:DDB_G0272098"/>
<dbReference type="dictyBase" id="DDB_G0272098">
    <property type="gene designation" value="trafP"/>
</dbReference>
<dbReference type="VEuPathDB" id="AmoebaDB:DDB_G0272098"/>
<dbReference type="HOGENOM" id="CLU_285667_0_0_1"/>
<dbReference type="InParanoid" id="Q55A66"/>
<dbReference type="PRO" id="PR:Q55A66"/>
<dbReference type="Proteomes" id="UP000002195">
    <property type="component" value="Chromosome 2"/>
</dbReference>
<dbReference type="GO" id="GO:0005737">
    <property type="term" value="C:cytoplasm"/>
    <property type="evidence" value="ECO:0000318"/>
    <property type="project" value="GO_Central"/>
</dbReference>
<dbReference type="GO" id="GO:0008270">
    <property type="term" value="F:zinc ion binding"/>
    <property type="evidence" value="ECO:0007669"/>
    <property type="project" value="UniProtKB-KW"/>
</dbReference>
<dbReference type="CDD" id="cd00121">
    <property type="entry name" value="MATH"/>
    <property type="match status" value="1"/>
</dbReference>
<dbReference type="Gene3D" id="2.60.210.10">
    <property type="entry name" value="Apoptosis, Tumor Necrosis Factor Receptor Associated Protein 2, Chain A"/>
    <property type="match status" value="1"/>
</dbReference>
<dbReference type="Gene3D" id="3.30.40.10">
    <property type="entry name" value="Zinc/RING finger domain, C3HC4 (zinc finger)"/>
    <property type="match status" value="2"/>
</dbReference>
<dbReference type="InterPro" id="IPR002083">
    <property type="entry name" value="MATH/TRAF_dom"/>
</dbReference>
<dbReference type="InterPro" id="IPR052504">
    <property type="entry name" value="Mucin_signaling_protection"/>
</dbReference>
<dbReference type="InterPro" id="IPR008974">
    <property type="entry name" value="TRAF-like"/>
</dbReference>
<dbReference type="InterPro" id="IPR013083">
    <property type="entry name" value="Znf_RING/FYVE/PHD"/>
</dbReference>
<dbReference type="InterPro" id="IPR001293">
    <property type="entry name" value="Znf_TRAF"/>
</dbReference>
<dbReference type="PANTHER" id="PTHR24041">
    <property type="entry name" value="MUCIN"/>
    <property type="match status" value="1"/>
</dbReference>
<dbReference type="PANTHER" id="PTHR24041:SF30">
    <property type="entry name" value="MUCIN-3A"/>
    <property type="match status" value="1"/>
</dbReference>
<dbReference type="Pfam" id="PF22486">
    <property type="entry name" value="MATH_2"/>
    <property type="match status" value="1"/>
</dbReference>
<dbReference type="Pfam" id="PF02176">
    <property type="entry name" value="zf-TRAF"/>
    <property type="match status" value="1"/>
</dbReference>
<dbReference type="SUPFAM" id="SSF81995">
    <property type="entry name" value="beta-sandwich domain of Sec23/24"/>
    <property type="match status" value="1"/>
</dbReference>
<dbReference type="SUPFAM" id="SSF57850">
    <property type="entry name" value="RING/U-box"/>
    <property type="match status" value="1"/>
</dbReference>
<dbReference type="SUPFAM" id="SSF49599">
    <property type="entry name" value="TRAF domain-like"/>
    <property type="match status" value="1"/>
</dbReference>
<dbReference type="PROSITE" id="PS50144">
    <property type="entry name" value="MATH"/>
    <property type="match status" value="1"/>
</dbReference>
<dbReference type="PROSITE" id="PS50145">
    <property type="entry name" value="ZF_TRAF"/>
    <property type="match status" value="1"/>
</dbReference>
<gene>
    <name type="ORF">DDB_G0272098</name>
</gene>
<accession>Q55A66</accession>
<feature type="chain" id="PRO_0000393762" description="TNF receptor-associated factor family protein DDB_G0272098">
    <location>
        <begin position="1"/>
        <end position="1084"/>
    </location>
</feature>
<feature type="domain" description="LIM zinc-binding">
    <location>
        <begin position="19"/>
        <end position="103"/>
    </location>
</feature>
<feature type="domain" description="MATH" evidence="3">
    <location>
        <begin position="909"/>
        <end position="1042"/>
    </location>
</feature>
<feature type="zinc finger region" description="TRAF-type 1" evidence="4">
    <location>
        <begin position="122"/>
        <end position="190"/>
    </location>
</feature>
<feature type="zinc finger region" description="TRAF-type 2" evidence="4">
    <location>
        <begin position="191"/>
        <end position="248"/>
    </location>
</feature>
<feature type="region of interest" description="Disordered" evidence="5">
    <location>
        <begin position="348"/>
        <end position="392"/>
    </location>
</feature>
<feature type="region of interest" description="Disordered" evidence="5">
    <location>
        <begin position="490"/>
        <end position="523"/>
    </location>
</feature>
<feature type="region of interest" description="Disordered" evidence="5">
    <location>
        <begin position="537"/>
        <end position="656"/>
    </location>
</feature>
<feature type="region of interest" description="Disordered" evidence="5">
    <location>
        <begin position="709"/>
        <end position="897"/>
    </location>
</feature>
<feature type="region of interest" description="Disordered" evidence="5">
    <location>
        <begin position="1056"/>
        <end position="1084"/>
    </location>
</feature>
<feature type="coiled-coil region" evidence="2">
    <location>
        <begin position="265"/>
        <end position="321"/>
    </location>
</feature>
<feature type="coiled-coil region" evidence="2">
    <location>
        <begin position="489"/>
        <end position="553"/>
    </location>
</feature>
<feature type="coiled-coil region" evidence="2">
    <location>
        <begin position="735"/>
        <end position="852"/>
    </location>
</feature>
<feature type="compositionally biased region" description="Low complexity" evidence="5">
    <location>
        <begin position="349"/>
        <end position="375"/>
    </location>
</feature>
<feature type="compositionally biased region" description="Low complexity" evidence="5">
    <location>
        <begin position="492"/>
        <end position="509"/>
    </location>
</feature>
<feature type="compositionally biased region" description="Low complexity" evidence="5">
    <location>
        <begin position="537"/>
        <end position="549"/>
    </location>
</feature>
<feature type="compositionally biased region" description="Low complexity" evidence="5">
    <location>
        <begin position="556"/>
        <end position="570"/>
    </location>
</feature>
<feature type="compositionally biased region" description="Polar residues" evidence="5">
    <location>
        <begin position="571"/>
        <end position="586"/>
    </location>
</feature>
<feature type="compositionally biased region" description="Low complexity" evidence="5">
    <location>
        <begin position="587"/>
        <end position="637"/>
    </location>
</feature>
<feature type="compositionally biased region" description="Basic and acidic residues" evidence="5">
    <location>
        <begin position="644"/>
        <end position="656"/>
    </location>
</feature>
<feature type="compositionally biased region" description="Acidic residues" evidence="5">
    <location>
        <begin position="739"/>
        <end position="757"/>
    </location>
</feature>
<feature type="compositionally biased region" description="Polar residues" evidence="5">
    <location>
        <begin position="774"/>
        <end position="785"/>
    </location>
</feature>
<feature type="compositionally biased region" description="Basic and acidic residues" evidence="5">
    <location>
        <begin position="790"/>
        <end position="799"/>
    </location>
</feature>
<feature type="compositionally biased region" description="Low complexity" evidence="5">
    <location>
        <begin position="809"/>
        <end position="849"/>
    </location>
</feature>
<feature type="compositionally biased region" description="Basic and acidic residues" evidence="5">
    <location>
        <begin position="853"/>
        <end position="864"/>
    </location>
</feature>
<feature type="compositionally biased region" description="Basic and acidic residues" evidence="5">
    <location>
        <begin position="875"/>
        <end position="892"/>
    </location>
</feature>
<feature type="compositionally biased region" description="Low complexity" evidence="5">
    <location>
        <begin position="1059"/>
        <end position="1084"/>
    </location>
</feature>
<comment type="function">
    <text evidence="1">Probable adapter protein and signal transducer that links members of the tumor necrosis factor receptor family to different signaling pathways by association with the receptor cytoplasmic domain and kinases.</text>
</comment>
<comment type="subcellular location">
    <subcellularLocation>
        <location evidence="1">Cytoplasm</location>
    </subcellularLocation>
</comment>
<comment type="domain">
    <text>The MATH/TRAF domain binds to receptor cytoplasmic domains.</text>
</comment>
<comment type="similarity">
    <text evidence="6">Belongs to the TNF receptor-associated factor family.</text>
</comment>
<protein>
    <recommendedName>
        <fullName>TNF receptor-associated factor family protein DDB_G0272098</fullName>
    </recommendedName>
</protein>
<sequence>MDIPIIKLLVEKDSISKKYYCPDCGELLINNFNPEKFKALQCKNGHTKCLQCWEQHLKLRKNCLQCKVPVSSIKDLSLNLYIAQKISANKVYCKNRYYETKNFTIDEENGCKEIIRVDEYEKHIKECPLTYTDCKNYDDFIRANPQIDEKLLKRCGKINKSLLDEHDEQCLYQTITCEHCNELINRIDHEIHLSEWCSDIPIKCEDCKHVFKKKYIQEHKESNCPESVIDCVYVAGGCQKKLKRYNMSKHLVTANHHSQYMSKIIEEQNQDIKELHNFIENHLSKKFIDLDTIVNIQKYLIKNKNQKISQLTEIIKRVDNSFIGLHEFDELEDYISNTIDIISNFDNYKNSNSNNNNNNKNTNENENTNENTNENENIDIVGNSDNENNINENKAENNINSFIKEQIELIKIKSQQFDINSVIEEIRKNYNVEPYQVNGDNAMITSPNKTDVDNLVFDDDEDDFDLEEPQIVGEFIFNKSQETIAIPTLIRQQQQQQQQQQQQQQQQQQQPPPTPLPPQNTTITNDIQMENINENINNNINENNNNNNKNNDDDNITAATATNNSNTTSTHTILNGTNNEASMTDINETTSTTTTAETTEATASESTEESNNTAETTTTTTTTTTTITTAAETVNSTETITLRTSEKVEEKGKDGLETTESFSILNSTENSTISSLKVLSNSMIEPEITTDKENETNIKESIETKIIESIVESSSPTKSLLKQGKEQEQKNQNGNGNENENENENENENENENENENENANANVNEKENEKENSNINTSNDTEPTNDILEDIKKNKENEDSNESEDNKNNNIKSVEDTNNNNNNNNNNNNNNNNNNNNNNNNNNNNNNNENVYDIKKDRNRENVEDSNDNNSKNENGKINDNGDVKMGSEDKVNDDDDKMAMVDRSNTIFRNQILFKDFTKLNARHGVGVSIKHNHTIGKYKFYSELFINGETENEKDYLSFYLNKCKKENESIIISFGIELLNVDPKKSIRVYWDNELLNNSSQVMYNYGYGETTVIKKSILEDPNNGFLVDNCFIVNLEVYKIIDVPHPPPAHLLQKSSPPAATTTTTTSSSSSKTTPKTKR</sequence>
<evidence type="ECO:0000250" key="1"/>
<evidence type="ECO:0000255" key="2"/>
<evidence type="ECO:0000255" key="3">
    <source>
        <dbReference type="PROSITE-ProRule" id="PRU00129"/>
    </source>
</evidence>
<evidence type="ECO:0000255" key="4">
    <source>
        <dbReference type="PROSITE-ProRule" id="PRU00207"/>
    </source>
</evidence>
<evidence type="ECO:0000256" key="5">
    <source>
        <dbReference type="SAM" id="MobiDB-lite"/>
    </source>
</evidence>
<evidence type="ECO:0000305" key="6"/>